<accession>P9WIN6</accession>
<accession>L0T9F9</accession>
<accession>O05822</accession>
<accession>P0A5P8</accession>
<dbReference type="EMBL" id="AE000516">
    <property type="protein sequence ID" value="AAK46739.1"/>
    <property type="molecule type" value="Genomic_DNA"/>
</dbReference>
<dbReference type="PIR" id="G70587">
    <property type="entry name" value="G70587"/>
</dbReference>
<dbReference type="RefSeq" id="WP_003917622.1">
    <property type="nucleotide sequence ID" value="NZ_KK341227.1"/>
</dbReference>
<dbReference type="SMR" id="P9WIN6"/>
<dbReference type="KEGG" id="mtc:MT2445"/>
<dbReference type="PATRIC" id="fig|83331.31.peg.2635"/>
<dbReference type="HOGENOM" id="CLU_129262_0_0_11"/>
<dbReference type="Proteomes" id="UP000001020">
    <property type="component" value="Chromosome"/>
</dbReference>
<dbReference type="GO" id="GO:0005576">
    <property type="term" value="C:extracellular region"/>
    <property type="evidence" value="ECO:0007669"/>
    <property type="project" value="UniProtKB-SubCell"/>
</dbReference>
<name>MTB12_MYCTO</name>
<evidence type="ECO:0000250" key="1"/>
<evidence type="ECO:0000255" key="2"/>
<evidence type="ECO:0000305" key="3"/>
<feature type="signal peptide" evidence="2">
    <location>
        <begin position="1"/>
        <end position="22"/>
    </location>
</feature>
<feature type="propeptide" id="PRO_0000427973" evidence="1">
    <location>
        <begin position="23"/>
        <end position="48"/>
    </location>
</feature>
<feature type="chain" id="PRO_0000427974" description="Low molecular weight antigen MTB12">
    <location>
        <begin position="49"/>
        <end position="168"/>
    </location>
</feature>
<comment type="function">
    <text evidence="1">May play a role in the development of protective immune responses.</text>
</comment>
<comment type="subcellular location">
    <subcellularLocation>
        <location evidence="1">Secreted</location>
    </subcellularLocation>
</comment>
<comment type="similarity">
    <text evidence="3">Belongs to the MTB12 family.</text>
</comment>
<proteinExistence type="inferred from homology"/>
<organism>
    <name type="scientific">Mycobacterium tuberculosis (strain CDC 1551 / Oshkosh)</name>
    <dbReference type="NCBI Taxonomy" id="83331"/>
    <lineage>
        <taxon>Bacteria</taxon>
        <taxon>Bacillati</taxon>
        <taxon>Actinomycetota</taxon>
        <taxon>Actinomycetes</taxon>
        <taxon>Mycobacteriales</taxon>
        <taxon>Mycobacteriaceae</taxon>
        <taxon>Mycobacterium</taxon>
        <taxon>Mycobacterium tuberculosis complex</taxon>
    </lineage>
</organism>
<reference key="1">
    <citation type="journal article" date="2002" name="J. Bacteriol.">
        <title>Whole-genome comparison of Mycobacterium tuberculosis clinical and laboratory strains.</title>
        <authorList>
            <person name="Fleischmann R.D."/>
            <person name="Alland D."/>
            <person name="Eisen J.A."/>
            <person name="Carpenter L."/>
            <person name="White O."/>
            <person name="Peterson J.D."/>
            <person name="DeBoy R.T."/>
            <person name="Dodson R.J."/>
            <person name="Gwinn M.L."/>
            <person name="Haft D.H."/>
            <person name="Hickey E.K."/>
            <person name="Kolonay J.F."/>
            <person name="Nelson W.C."/>
            <person name="Umayam L.A."/>
            <person name="Ermolaeva M.D."/>
            <person name="Salzberg S.L."/>
            <person name="Delcher A."/>
            <person name="Utterback T.R."/>
            <person name="Weidman J.F."/>
            <person name="Khouri H.M."/>
            <person name="Gill J."/>
            <person name="Mikula A."/>
            <person name="Bishai W."/>
            <person name="Jacobs W.R. Jr."/>
            <person name="Venter J.C."/>
            <person name="Fraser C.M."/>
        </authorList>
    </citation>
    <scope>NUCLEOTIDE SEQUENCE [LARGE SCALE GENOMIC DNA]</scope>
    <source>
        <strain>CDC 1551 / Oshkosh</strain>
    </source>
</reference>
<protein>
    <recommendedName>
        <fullName>Low molecular weight antigen MTB12</fullName>
    </recommendedName>
    <alternativeName>
        <fullName>CFP-2</fullName>
    </alternativeName>
    <alternativeName>
        <fullName>Low molecular weight protein antigen 2</fullName>
    </alternativeName>
</protein>
<keyword id="KW-1185">Reference proteome</keyword>
<keyword id="KW-0964">Secreted</keyword>
<keyword id="KW-0732">Signal</keyword>
<sequence length="168" mass="16663">MKMVKSIAAGLTAAAAIGAAAAGVTSIMAGGPVVYQMQPVVFGAPLPLDPASAPDVPTAAQLTSLLNSLADPNVSFANKGSLVEGGIGGTEARIADHKLKKAAEHGDLPLSFSVTNIQPAAAGSATADVSVSGPKLSSPVTRNVTFVNQGGWMLSRASAMELLQAAGN</sequence>
<gene>
    <name type="primary">mtb12</name>
    <name type="synonym">cfp2</name>
    <name type="ordered locus">MT2445</name>
</gene>